<accession>C4ZZ62</accession>
<gene>
    <name evidence="1" type="primary">wecG</name>
    <name evidence="1" type="synonym">rffM</name>
    <name type="ordered locus">BWG_3477</name>
</gene>
<name>WECG_ECOBW</name>
<sequence>MNNNTTAPTYTLRGLQLIGWRDMQHALDYLFADGQLKQGTLVAINAEKMLTIEDNAEVRELINAAEFKYADGISVVRSVRKKYPQAQVSRVAGADLWEELMARAGKEGTPVFLVGGKPEVLAQTEAKLRNQWNVNIVGSQDGYFKPEQRQALFERIHASGAQIVTVAMGSPKQEIIMRDCRLVHPDALYMGVGGTYDVFTGHVKRAPKIWQTLGLEWLYRLLSQPSRIKRQLRLLRYLRWHYTGNL</sequence>
<reference key="1">
    <citation type="journal article" date="2009" name="J. Bacteriol.">
        <title>Genomic sequencing reveals regulatory mutations and recombinational events in the widely used MC4100 lineage of Escherichia coli K-12.</title>
        <authorList>
            <person name="Ferenci T."/>
            <person name="Zhou Z."/>
            <person name="Betteridge T."/>
            <person name="Ren Y."/>
            <person name="Liu Y."/>
            <person name="Feng L."/>
            <person name="Reeves P.R."/>
            <person name="Wang L."/>
        </authorList>
    </citation>
    <scope>NUCLEOTIDE SEQUENCE [LARGE SCALE GENOMIC DNA]</scope>
    <source>
        <strain>K12 / MC4100 / BW2952</strain>
    </source>
</reference>
<dbReference type="EC" id="2.4.1.180" evidence="1"/>
<dbReference type="EMBL" id="CP001396">
    <property type="protein sequence ID" value="ACR65744.1"/>
    <property type="molecule type" value="Genomic_DNA"/>
</dbReference>
<dbReference type="RefSeq" id="WP_001064040.1">
    <property type="nucleotide sequence ID" value="NC_012759.1"/>
</dbReference>
<dbReference type="SMR" id="C4ZZ62"/>
<dbReference type="CAZy" id="GT26">
    <property type="family name" value="Glycosyltransferase Family 26"/>
</dbReference>
<dbReference type="KEGG" id="ebw:BWG_3477"/>
<dbReference type="HOGENOM" id="CLU_063203_3_2_6"/>
<dbReference type="UniPathway" id="UPA00566"/>
<dbReference type="GO" id="GO:0047241">
    <property type="term" value="F:lipopolysaccharide N-acetylmannosaminouronosyltransferase activity"/>
    <property type="evidence" value="ECO:0007669"/>
    <property type="project" value="UniProtKB-UniRule"/>
</dbReference>
<dbReference type="GO" id="GO:0009246">
    <property type="term" value="P:enterobacterial common antigen biosynthetic process"/>
    <property type="evidence" value="ECO:0007669"/>
    <property type="project" value="UniProtKB-UniRule"/>
</dbReference>
<dbReference type="CDD" id="cd06533">
    <property type="entry name" value="Glyco_transf_WecG_TagA"/>
    <property type="match status" value="1"/>
</dbReference>
<dbReference type="HAMAP" id="MF_01001">
    <property type="entry name" value="WecG_RffM"/>
    <property type="match status" value="1"/>
</dbReference>
<dbReference type="InterPro" id="IPR023085">
    <property type="entry name" value="UDP-ManNAcA_Trfase_WecG"/>
</dbReference>
<dbReference type="InterPro" id="IPR004629">
    <property type="entry name" value="WecG_TagA_CpsF"/>
</dbReference>
<dbReference type="NCBIfam" id="NF002980">
    <property type="entry name" value="PRK03692.1"/>
    <property type="match status" value="1"/>
</dbReference>
<dbReference type="NCBIfam" id="TIGR00696">
    <property type="entry name" value="wecG_tagA_cpsF"/>
    <property type="match status" value="1"/>
</dbReference>
<dbReference type="PANTHER" id="PTHR34136">
    <property type="match status" value="1"/>
</dbReference>
<dbReference type="PANTHER" id="PTHR34136:SF1">
    <property type="entry name" value="UDP-N-ACETYL-D-MANNOSAMINURONIC ACID TRANSFERASE"/>
    <property type="match status" value="1"/>
</dbReference>
<dbReference type="Pfam" id="PF03808">
    <property type="entry name" value="Glyco_tran_WecG"/>
    <property type="match status" value="1"/>
</dbReference>
<keyword id="KW-0328">Glycosyltransferase</keyword>
<keyword id="KW-0808">Transferase</keyword>
<evidence type="ECO:0000255" key="1">
    <source>
        <dbReference type="HAMAP-Rule" id="MF_01001"/>
    </source>
</evidence>
<protein>
    <recommendedName>
        <fullName evidence="1">UDP-N-acetyl-D-mannosaminuronic acid transferase</fullName>
        <shortName evidence="1">UDP-ManNAcA transferase</shortName>
        <ecNumber evidence="1">2.4.1.180</ecNumber>
    </recommendedName>
</protein>
<feature type="chain" id="PRO_1000213137" description="UDP-N-acetyl-D-mannosaminuronic acid transferase">
    <location>
        <begin position="1"/>
        <end position="246"/>
    </location>
</feature>
<organism>
    <name type="scientific">Escherichia coli (strain K12 / MC4100 / BW2952)</name>
    <dbReference type="NCBI Taxonomy" id="595496"/>
    <lineage>
        <taxon>Bacteria</taxon>
        <taxon>Pseudomonadati</taxon>
        <taxon>Pseudomonadota</taxon>
        <taxon>Gammaproteobacteria</taxon>
        <taxon>Enterobacterales</taxon>
        <taxon>Enterobacteriaceae</taxon>
        <taxon>Escherichia</taxon>
    </lineage>
</organism>
<comment type="function">
    <text evidence="1">Catalyzes the synthesis of Und-PP-GlcNAc-ManNAcA (Lipid II), the second lipid-linked intermediate involved in enterobacterial common antigen (ECA) synthesis.</text>
</comment>
<comment type="catalytic activity">
    <reaction evidence="1">
        <text>UDP-N-acetyl-alpha-D-mannosaminouronate + N-acetyl-alpha-D-glucosaminyl-di-trans,octa-cis-undecaprenyl diphosphate = beta-D-ManNAcA-(1-&gt;4)-alpha-D-GlcNAc-di-trans,octa-cis-undecaprenyl diphosphate + UDP + H(+)</text>
        <dbReference type="Rhea" id="RHEA:28366"/>
        <dbReference type="ChEBI" id="CHEBI:15378"/>
        <dbReference type="ChEBI" id="CHEBI:58223"/>
        <dbReference type="ChEBI" id="CHEBI:61495"/>
        <dbReference type="ChEBI" id="CHEBI:62959"/>
        <dbReference type="ChEBI" id="CHEBI:70731"/>
        <dbReference type="EC" id="2.4.1.180"/>
    </reaction>
</comment>
<comment type="pathway">
    <text evidence="1">Bacterial outer membrane biogenesis; enterobacterial common antigen biosynthesis.</text>
</comment>
<comment type="similarity">
    <text evidence="1">Belongs to the glycosyltransferase 26 family.</text>
</comment>
<proteinExistence type="inferred from homology"/>